<organism>
    <name type="scientific">Caenorhabditis elegans</name>
    <dbReference type="NCBI Taxonomy" id="6239"/>
    <lineage>
        <taxon>Eukaryota</taxon>
        <taxon>Metazoa</taxon>
        <taxon>Ecdysozoa</taxon>
        <taxon>Nematoda</taxon>
        <taxon>Chromadorea</taxon>
        <taxon>Rhabditida</taxon>
        <taxon>Rhabditina</taxon>
        <taxon>Rhabditomorpha</taxon>
        <taxon>Rhabditoidea</taxon>
        <taxon>Rhabditidae</taxon>
        <taxon>Peloderinae</taxon>
        <taxon>Caenorhabditis</taxon>
    </lineage>
</organism>
<keyword id="KW-1185">Reference proteome</keyword>
<keyword id="KW-0734">Signal transduction inhibitor</keyword>
<protein>
    <recommendedName>
        <fullName>Regulator of G-protein signaling rgs-11</fullName>
    </recommendedName>
</protein>
<feature type="chain" id="PRO_0000223576" description="Regulator of G-protein signaling rgs-11">
    <location>
        <begin position="1"/>
        <end position="274"/>
    </location>
</feature>
<feature type="domain" description="RGS" evidence="1">
    <location>
        <begin position="137"/>
        <end position="256"/>
    </location>
</feature>
<sequence length="274" mass="31743">MSIAITSPCQIFPAIINADVYEKNLKVDDNAINVSKYSDNSVSLPTLSYEDFHHFSVVRHWNILFPYRLATEWNWESRRLRKRDALVILELVALSDETNKRGSVSRIMNTVRSKVHLMFSSSTELPSFQEIENWKKSPGLLAASKYGCALFIQFLKQQTSENEVDFWLDCQKFRSSTAKISWKNKEVHRILDQFLSSSAPRKIDMETSILARCMEYVEHIEGWKYTFDVAQAYVGLKFPKESHKKFLEDPLYLDLLELVISGRSCNKVGHKKSC</sequence>
<evidence type="ECO:0000255" key="1">
    <source>
        <dbReference type="PROSITE-ProRule" id="PRU00171"/>
    </source>
</evidence>
<gene>
    <name type="primary">rgs-11</name>
    <name type="ORF">F45B8.1</name>
</gene>
<accession>O45524</accession>
<name>RGS11_CAEEL</name>
<proteinExistence type="predicted"/>
<reference key="1">
    <citation type="journal article" date="1998" name="Science">
        <title>Genome sequence of the nematode C. elegans: a platform for investigating biology.</title>
        <authorList>
            <consortium name="The C. elegans sequencing consortium"/>
        </authorList>
    </citation>
    <scope>NUCLEOTIDE SEQUENCE [LARGE SCALE GENOMIC DNA]</scope>
    <source>
        <strain>Bristol N2</strain>
    </source>
</reference>
<dbReference type="EMBL" id="Z83227">
    <property type="protein sequence ID" value="CAB05728.1"/>
    <property type="molecule type" value="Genomic_DNA"/>
</dbReference>
<dbReference type="PIR" id="T22214">
    <property type="entry name" value="T22214"/>
</dbReference>
<dbReference type="RefSeq" id="NP_510483.1">
    <property type="nucleotide sequence ID" value="NM_078082.5"/>
</dbReference>
<dbReference type="SMR" id="O45524"/>
<dbReference type="FunCoup" id="O45524">
    <property type="interactions" value="3"/>
</dbReference>
<dbReference type="STRING" id="6239.F45B8.1.1"/>
<dbReference type="PaxDb" id="6239-F45B8.1"/>
<dbReference type="EnsemblMetazoa" id="F45B8.1.1">
    <property type="protein sequence ID" value="F45B8.1.1"/>
    <property type="gene ID" value="WBGene00004354"/>
</dbReference>
<dbReference type="GeneID" id="181590"/>
<dbReference type="KEGG" id="cel:CELE_F45B8.1"/>
<dbReference type="UCSC" id="F45B8.1">
    <property type="organism name" value="c. elegans"/>
</dbReference>
<dbReference type="AGR" id="WB:WBGene00004354"/>
<dbReference type="CTD" id="181590"/>
<dbReference type="WormBase" id="F45B8.1">
    <property type="protein sequence ID" value="CE10428"/>
    <property type="gene ID" value="WBGene00004354"/>
    <property type="gene designation" value="rgs-11"/>
</dbReference>
<dbReference type="eggNOG" id="KOG3589">
    <property type="taxonomic scope" value="Eukaryota"/>
</dbReference>
<dbReference type="GeneTree" id="ENSGT00970000196865"/>
<dbReference type="HOGENOM" id="CLU_1031475_0_0_1"/>
<dbReference type="InParanoid" id="O45524"/>
<dbReference type="OrthoDB" id="196547at2759"/>
<dbReference type="PhylomeDB" id="O45524"/>
<dbReference type="Reactome" id="R-CEL-416476">
    <property type="pathway name" value="G alpha (q) signalling events"/>
</dbReference>
<dbReference type="Reactome" id="R-CEL-418594">
    <property type="pathway name" value="G alpha (i) signalling events"/>
</dbReference>
<dbReference type="Reactome" id="R-CEL-418597">
    <property type="pathway name" value="G alpha (z) signalling events"/>
</dbReference>
<dbReference type="PRO" id="PR:O45524"/>
<dbReference type="Proteomes" id="UP000001940">
    <property type="component" value="Chromosome X"/>
</dbReference>
<dbReference type="Bgee" id="WBGene00004354">
    <property type="expression patterns" value="Expressed in embryo and 3 other cell types or tissues"/>
</dbReference>
<dbReference type="GO" id="GO:0009968">
    <property type="term" value="P:negative regulation of signal transduction"/>
    <property type="evidence" value="ECO:0007669"/>
    <property type="project" value="UniProtKB-KW"/>
</dbReference>
<dbReference type="CDD" id="cd07440">
    <property type="entry name" value="RGS"/>
    <property type="match status" value="1"/>
</dbReference>
<dbReference type="Gene3D" id="1.10.167.10">
    <property type="entry name" value="Regulator of G-protein Signalling 4, domain 2"/>
    <property type="match status" value="1"/>
</dbReference>
<dbReference type="InterPro" id="IPR016137">
    <property type="entry name" value="RGS"/>
</dbReference>
<dbReference type="InterPro" id="IPR036305">
    <property type="entry name" value="RGS_sf"/>
</dbReference>
<dbReference type="InterPro" id="IPR044926">
    <property type="entry name" value="RGS_subdomain_2"/>
</dbReference>
<dbReference type="PANTHER" id="PTHR10845">
    <property type="entry name" value="REGULATOR OF G PROTEIN SIGNALING"/>
    <property type="match status" value="1"/>
</dbReference>
<dbReference type="PANTHER" id="PTHR10845:SF259">
    <property type="entry name" value="RGS DOMAIN-CONTAINING PROTEIN-RELATED"/>
    <property type="match status" value="1"/>
</dbReference>
<dbReference type="Pfam" id="PF00615">
    <property type="entry name" value="RGS"/>
    <property type="match status" value="1"/>
</dbReference>
<dbReference type="PRINTS" id="PR01301">
    <property type="entry name" value="RGSPROTEIN"/>
</dbReference>
<dbReference type="SMART" id="SM00315">
    <property type="entry name" value="RGS"/>
    <property type="match status" value="1"/>
</dbReference>
<dbReference type="SUPFAM" id="SSF48097">
    <property type="entry name" value="Regulator of G-protein signaling, RGS"/>
    <property type="match status" value="1"/>
</dbReference>
<dbReference type="PROSITE" id="PS50132">
    <property type="entry name" value="RGS"/>
    <property type="match status" value="1"/>
</dbReference>